<comment type="function">
    <text evidence="1">Component of the eukaryotic translation initiation factor 3 (eIF-3) complex, which is involved in protein synthesis of a specialized repertoire of mRNAs and, together with other initiation factors, stimulates binding of mRNA and methionyl-tRNAi to the 40S ribosome. The eIF-3 complex specifically targets and initiates translation of a subset of mRNAs involved in cell proliferation.</text>
</comment>
<comment type="subunit">
    <text evidence="1 3">Component of the eukaryotic translation initiation factor 3 (eIF-3) complex. The eIF-3 complex interacts with pix.</text>
</comment>
<comment type="subcellular location">
    <subcellularLocation>
        <location evidence="1">Cytoplasm</location>
    </subcellularLocation>
</comment>
<comment type="similarity">
    <text evidence="1">Belongs to the eIF-3 subunit J family.</text>
</comment>
<evidence type="ECO:0000255" key="1">
    <source>
        <dbReference type="HAMAP-Rule" id="MF_03009"/>
    </source>
</evidence>
<evidence type="ECO:0000256" key="2">
    <source>
        <dbReference type="SAM" id="MobiDB-lite"/>
    </source>
</evidence>
<evidence type="ECO:0000269" key="3">
    <source>
    </source>
</evidence>
<evidence type="ECO:0000312" key="4">
    <source>
        <dbReference type="FlyBase" id="FBgn0027619"/>
    </source>
</evidence>
<dbReference type="EMBL" id="AE013599">
    <property type="protein sequence ID" value="AAF58867.1"/>
    <property type="molecule type" value="Genomic_DNA"/>
</dbReference>
<dbReference type="EMBL" id="AY051457">
    <property type="protein sequence ID" value="AAK92881.1"/>
    <property type="molecule type" value="mRNA"/>
</dbReference>
<dbReference type="RefSeq" id="NP_001286260.1">
    <property type="nucleotide sequence ID" value="NM_001299331.1"/>
</dbReference>
<dbReference type="RefSeq" id="NP_610541.1">
    <property type="nucleotide sequence ID" value="NM_136697.3"/>
</dbReference>
<dbReference type="SMR" id="Q7K550"/>
<dbReference type="BioGRID" id="61865">
    <property type="interactions" value="14"/>
</dbReference>
<dbReference type="FunCoup" id="Q7K550">
    <property type="interactions" value="1638"/>
</dbReference>
<dbReference type="IntAct" id="Q7K550">
    <property type="interactions" value="57"/>
</dbReference>
<dbReference type="STRING" id="7227.FBpp0087475"/>
<dbReference type="GlyGen" id="Q7K550">
    <property type="glycosylation" value="1 site"/>
</dbReference>
<dbReference type="PaxDb" id="7227-FBpp0087475"/>
<dbReference type="DNASU" id="36037"/>
<dbReference type="EnsemblMetazoa" id="FBtr0088387">
    <property type="protein sequence ID" value="FBpp0087475"/>
    <property type="gene ID" value="FBgn0027619"/>
</dbReference>
<dbReference type="EnsemblMetazoa" id="FBtr0339425">
    <property type="protein sequence ID" value="FBpp0308512"/>
    <property type="gene ID" value="FBgn0027619"/>
</dbReference>
<dbReference type="GeneID" id="36037"/>
<dbReference type="KEGG" id="dme:Dmel_CG12131"/>
<dbReference type="UCSC" id="CG12131-RA">
    <property type="organism name" value="d. melanogaster"/>
</dbReference>
<dbReference type="AGR" id="FB:FBgn0027619"/>
<dbReference type="CTD" id="8669"/>
<dbReference type="FlyBase" id="FBgn0027619">
    <property type="gene designation" value="eIF3j"/>
</dbReference>
<dbReference type="VEuPathDB" id="VectorBase:FBgn0027619"/>
<dbReference type="eggNOG" id="KOG4813">
    <property type="taxonomic scope" value="Eukaryota"/>
</dbReference>
<dbReference type="GeneTree" id="ENSGT00390000018400"/>
<dbReference type="HOGENOM" id="CLU_085806_2_0_1"/>
<dbReference type="InParanoid" id="Q7K550"/>
<dbReference type="OMA" id="KPHYALW"/>
<dbReference type="OrthoDB" id="20381at2759"/>
<dbReference type="PhylomeDB" id="Q7K550"/>
<dbReference type="Reactome" id="R-DME-156827">
    <property type="pathway name" value="L13a-mediated translational silencing of Ceruloplasmin expression"/>
</dbReference>
<dbReference type="Reactome" id="R-DME-72649">
    <property type="pathway name" value="Translation initiation complex formation"/>
</dbReference>
<dbReference type="Reactome" id="R-DME-72689">
    <property type="pathway name" value="Formation of a pool of free 40S subunits"/>
</dbReference>
<dbReference type="Reactome" id="R-DME-72695">
    <property type="pathway name" value="Formation of the ternary complex, and subsequently, the 43S complex"/>
</dbReference>
<dbReference type="Reactome" id="R-DME-72702">
    <property type="pathway name" value="Ribosomal scanning and start codon recognition"/>
</dbReference>
<dbReference type="BioGRID-ORCS" id="36037">
    <property type="hits" value="0 hits in 1 CRISPR screen"/>
</dbReference>
<dbReference type="ChiTaRS" id="Adam">
    <property type="organism name" value="fly"/>
</dbReference>
<dbReference type="GenomeRNAi" id="36037"/>
<dbReference type="PRO" id="PR:Q7K550"/>
<dbReference type="Proteomes" id="UP000000803">
    <property type="component" value="Chromosome 2R"/>
</dbReference>
<dbReference type="Bgee" id="FBgn0027619">
    <property type="expression patterns" value="Expressed in distal medullary amacrine neuron Dm11 in insect head and 260 other cell types or tissues"/>
</dbReference>
<dbReference type="ExpressionAtlas" id="Q7K550">
    <property type="expression patterns" value="baseline and differential"/>
</dbReference>
<dbReference type="GO" id="GO:0016282">
    <property type="term" value="C:eukaryotic 43S preinitiation complex"/>
    <property type="evidence" value="ECO:0007669"/>
    <property type="project" value="UniProtKB-UniRule"/>
</dbReference>
<dbReference type="GO" id="GO:0033290">
    <property type="term" value="C:eukaryotic 48S preinitiation complex"/>
    <property type="evidence" value="ECO:0007669"/>
    <property type="project" value="UniProtKB-UniRule"/>
</dbReference>
<dbReference type="GO" id="GO:0005852">
    <property type="term" value="C:eukaryotic translation initiation factor 3 complex"/>
    <property type="evidence" value="ECO:0000314"/>
    <property type="project" value="UniProtKB"/>
</dbReference>
<dbReference type="GO" id="GO:0003743">
    <property type="term" value="F:translation initiation factor activity"/>
    <property type="evidence" value="ECO:0000314"/>
    <property type="project" value="UniProtKB"/>
</dbReference>
<dbReference type="GO" id="GO:0001732">
    <property type="term" value="P:formation of cytoplasmic translation initiation complex"/>
    <property type="evidence" value="ECO:0007669"/>
    <property type="project" value="UniProtKB-UniRule"/>
</dbReference>
<dbReference type="GO" id="GO:0006446">
    <property type="term" value="P:regulation of translational initiation"/>
    <property type="evidence" value="ECO:0000314"/>
    <property type="project" value="UniProtKB"/>
</dbReference>
<dbReference type="GO" id="GO:0006413">
    <property type="term" value="P:translational initiation"/>
    <property type="evidence" value="ECO:0000250"/>
    <property type="project" value="FlyBase"/>
</dbReference>
<dbReference type="Gene3D" id="1.10.246.60">
    <property type="entry name" value="Eukaryotic translation initiation factor 3 like domains"/>
    <property type="match status" value="1"/>
</dbReference>
<dbReference type="HAMAP" id="MF_03009">
    <property type="entry name" value="eIF3j"/>
    <property type="match status" value="1"/>
</dbReference>
<dbReference type="InterPro" id="IPR023194">
    <property type="entry name" value="eIF3-like_dom_sf"/>
</dbReference>
<dbReference type="InterPro" id="IPR013906">
    <property type="entry name" value="eIF3j"/>
</dbReference>
<dbReference type="PANTHER" id="PTHR21681">
    <property type="entry name" value="EUKARYOTIC TRANSLATION INITIATION FACTOR 3 SUBUNIT J"/>
    <property type="match status" value="1"/>
</dbReference>
<dbReference type="PANTHER" id="PTHR21681:SF0">
    <property type="entry name" value="EUKARYOTIC TRANSLATION INITIATION FACTOR 3 SUBUNIT J"/>
    <property type="match status" value="1"/>
</dbReference>
<dbReference type="Pfam" id="PF08597">
    <property type="entry name" value="eIF3_subunit"/>
    <property type="match status" value="1"/>
</dbReference>
<reference key="1">
    <citation type="journal article" date="2000" name="Science">
        <title>The genome sequence of Drosophila melanogaster.</title>
        <authorList>
            <person name="Adams M.D."/>
            <person name="Celniker S.E."/>
            <person name="Holt R.A."/>
            <person name="Evans C.A."/>
            <person name="Gocayne J.D."/>
            <person name="Amanatides P.G."/>
            <person name="Scherer S.E."/>
            <person name="Li P.W."/>
            <person name="Hoskins R.A."/>
            <person name="Galle R.F."/>
            <person name="George R.A."/>
            <person name="Lewis S.E."/>
            <person name="Richards S."/>
            <person name="Ashburner M."/>
            <person name="Henderson S.N."/>
            <person name="Sutton G.G."/>
            <person name="Wortman J.R."/>
            <person name="Yandell M.D."/>
            <person name="Zhang Q."/>
            <person name="Chen L.X."/>
            <person name="Brandon R.C."/>
            <person name="Rogers Y.-H.C."/>
            <person name="Blazej R.G."/>
            <person name="Champe M."/>
            <person name="Pfeiffer B.D."/>
            <person name="Wan K.H."/>
            <person name="Doyle C."/>
            <person name="Baxter E.G."/>
            <person name="Helt G."/>
            <person name="Nelson C.R."/>
            <person name="Miklos G.L.G."/>
            <person name="Abril J.F."/>
            <person name="Agbayani A."/>
            <person name="An H.-J."/>
            <person name="Andrews-Pfannkoch C."/>
            <person name="Baldwin D."/>
            <person name="Ballew R.M."/>
            <person name="Basu A."/>
            <person name="Baxendale J."/>
            <person name="Bayraktaroglu L."/>
            <person name="Beasley E.M."/>
            <person name="Beeson K.Y."/>
            <person name="Benos P.V."/>
            <person name="Berman B.P."/>
            <person name="Bhandari D."/>
            <person name="Bolshakov S."/>
            <person name="Borkova D."/>
            <person name="Botchan M.R."/>
            <person name="Bouck J."/>
            <person name="Brokstein P."/>
            <person name="Brottier P."/>
            <person name="Burtis K.C."/>
            <person name="Busam D.A."/>
            <person name="Butler H."/>
            <person name="Cadieu E."/>
            <person name="Center A."/>
            <person name="Chandra I."/>
            <person name="Cherry J.M."/>
            <person name="Cawley S."/>
            <person name="Dahlke C."/>
            <person name="Davenport L.B."/>
            <person name="Davies P."/>
            <person name="de Pablos B."/>
            <person name="Delcher A."/>
            <person name="Deng Z."/>
            <person name="Mays A.D."/>
            <person name="Dew I."/>
            <person name="Dietz S.M."/>
            <person name="Dodson K."/>
            <person name="Doup L.E."/>
            <person name="Downes M."/>
            <person name="Dugan-Rocha S."/>
            <person name="Dunkov B.C."/>
            <person name="Dunn P."/>
            <person name="Durbin K.J."/>
            <person name="Evangelista C.C."/>
            <person name="Ferraz C."/>
            <person name="Ferriera S."/>
            <person name="Fleischmann W."/>
            <person name="Fosler C."/>
            <person name="Gabrielian A.E."/>
            <person name="Garg N.S."/>
            <person name="Gelbart W.M."/>
            <person name="Glasser K."/>
            <person name="Glodek A."/>
            <person name="Gong F."/>
            <person name="Gorrell J.H."/>
            <person name="Gu Z."/>
            <person name="Guan P."/>
            <person name="Harris M."/>
            <person name="Harris N.L."/>
            <person name="Harvey D.A."/>
            <person name="Heiman T.J."/>
            <person name="Hernandez J.R."/>
            <person name="Houck J."/>
            <person name="Hostin D."/>
            <person name="Houston K.A."/>
            <person name="Howland T.J."/>
            <person name="Wei M.-H."/>
            <person name="Ibegwam C."/>
            <person name="Jalali M."/>
            <person name="Kalush F."/>
            <person name="Karpen G.H."/>
            <person name="Ke Z."/>
            <person name="Kennison J.A."/>
            <person name="Ketchum K.A."/>
            <person name="Kimmel B.E."/>
            <person name="Kodira C.D."/>
            <person name="Kraft C.L."/>
            <person name="Kravitz S."/>
            <person name="Kulp D."/>
            <person name="Lai Z."/>
            <person name="Lasko P."/>
            <person name="Lei Y."/>
            <person name="Levitsky A.A."/>
            <person name="Li J.H."/>
            <person name="Li Z."/>
            <person name="Liang Y."/>
            <person name="Lin X."/>
            <person name="Liu X."/>
            <person name="Mattei B."/>
            <person name="McIntosh T.C."/>
            <person name="McLeod M.P."/>
            <person name="McPherson D."/>
            <person name="Merkulov G."/>
            <person name="Milshina N.V."/>
            <person name="Mobarry C."/>
            <person name="Morris J."/>
            <person name="Moshrefi A."/>
            <person name="Mount S.M."/>
            <person name="Moy M."/>
            <person name="Murphy B."/>
            <person name="Murphy L."/>
            <person name="Muzny D.M."/>
            <person name="Nelson D.L."/>
            <person name="Nelson D.R."/>
            <person name="Nelson K.A."/>
            <person name="Nixon K."/>
            <person name="Nusskern D.R."/>
            <person name="Pacleb J.M."/>
            <person name="Palazzolo M."/>
            <person name="Pittman G.S."/>
            <person name="Pan S."/>
            <person name="Pollard J."/>
            <person name="Puri V."/>
            <person name="Reese M.G."/>
            <person name="Reinert K."/>
            <person name="Remington K."/>
            <person name="Saunders R.D.C."/>
            <person name="Scheeler F."/>
            <person name="Shen H."/>
            <person name="Shue B.C."/>
            <person name="Siden-Kiamos I."/>
            <person name="Simpson M."/>
            <person name="Skupski M.P."/>
            <person name="Smith T.J."/>
            <person name="Spier E."/>
            <person name="Spradling A.C."/>
            <person name="Stapleton M."/>
            <person name="Strong R."/>
            <person name="Sun E."/>
            <person name="Svirskas R."/>
            <person name="Tector C."/>
            <person name="Turner R."/>
            <person name="Venter E."/>
            <person name="Wang A.H."/>
            <person name="Wang X."/>
            <person name="Wang Z.-Y."/>
            <person name="Wassarman D.A."/>
            <person name="Weinstock G.M."/>
            <person name="Weissenbach J."/>
            <person name="Williams S.M."/>
            <person name="Woodage T."/>
            <person name="Worley K.C."/>
            <person name="Wu D."/>
            <person name="Yang S."/>
            <person name="Yao Q.A."/>
            <person name="Ye J."/>
            <person name="Yeh R.-F."/>
            <person name="Zaveri J.S."/>
            <person name="Zhan M."/>
            <person name="Zhang G."/>
            <person name="Zhao Q."/>
            <person name="Zheng L."/>
            <person name="Zheng X.H."/>
            <person name="Zhong F.N."/>
            <person name="Zhong W."/>
            <person name="Zhou X."/>
            <person name="Zhu S.C."/>
            <person name="Zhu X."/>
            <person name="Smith H.O."/>
            <person name="Gibbs R.A."/>
            <person name="Myers E.W."/>
            <person name="Rubin G.M."/>
            <person name="Venter J.C."/>
        </authorList>
    </citation>
    <scope>NUCLEOTIDE SEQUENCE [LARGE SCALE GENOMIC DNA]</scope>
    <source>
        <strain>Berkeley</strain>
    </source>
</reference>
<reference key="2">
    <citation type="journal article" date="2002" name="Genome Biol.">
        <title>Annotation of the Drosophila melanogaster euchromatic genome: a systematic review.</title>
        <authorList>
            <person name="Misra S."/>
            <person name="Crosby M.A."/>
            <person name="Mungall C.J."/>
            <person name="Matthews B.B."/>
            <person name="Campbell K.S."/>
            <person name="Hradecky P."/>
            <person name="Huang Y."/>
            <person name="Kaminker J.S."/>
            <person name="Millburn G.H."/>
            <person name="Prochnik S.E."/>
            <person name="Smith C.D."/>
            <person name="Tupy J.L."/>
            <person name="Whitfield E.J."/>
            <person name="Bayraktaroglu L."/>
            <person name="Berman B.P."/>
            <person name="Bettencourt B.R."/>
            <person name="Celniker S.E."/>
            <person name="de Grey A.D.N.J."/>
            <person name="Drysdale R.A."/>
            <person name="Harris N.L."/>
            <person name="Richter J."/>
            <person name="Russo S."/>
            <person name="Schroeder A.J."/>
            <person name="Shu S.Q."/>
            <person name="Stapleton M."/>
            <person name="Yamada C."/>
            <person name="Ashburner M."/>
            <person name="Gelbart W.M."/>
            <person name="Rubin G.M."/>
            <person name="Lewis S.E."/>
        </authorList>
    </citation>
    <scope>GENOME REANNOTATION</scope>
    <source>
        <strain>Berkeley</strain>
    </source>
</reference>
<reference key="3">
    <citation type="journal article" date="2002" name="Genome Biol.">
        <title>A Drosophila full-length cDNA resource.</title>
        <authorList>
            <person name="Stapleton M."/>
            <person name="Carlson J.W."/>
            <person name="Brokstein P."/>
            <person name="Yu C."/>
            <person name="Champe M."/>
            <person name="George R.A."/>
            <person name="Guarin H."/>
            <person name="Kronmiller B."/>
            <person name="Pacleb J.M."/>
            <person name="Park S."/>
            <person name="Wan K.H."/>
            <person name="Rubin G.M."/>
            <person name="Celniker S.E."/>
        </authorList>
    </citation>
    <scope>NUCLEOTIDE SEQUENCE [LARGE SCALE MRNA]</scope>
    <source>
        <strain>Berkeley</strain>
        <tissue>Head</tissue>
    </source>
</reference>
<reference key="4">
    <citation type="journal article" date="2007" name="J. Biol. Chem.">
        <title>The essential Drosophila ATP-binding cassette domain protein, pixie, binds the 40 S ribosome in an ATP-dependent manner and is required for translation initiation.</title>
        <authorList>
            <person name="Andersen D.S."/>
            <person name="Leevers S.J."/>
        </authorList>
    </citation>
    <scope>IDENTIFICATION BY MASS SPECTROMETRY</scope>
    <scope>INTERACTION WITH PIX</scope>
    <scope>ASSOCIATION WITH THE 40S RIBOSOME</scope>
</reference>
<sequence>MADDWESAADSEVVIRPTAAASVNKWEGEDEDEDIKDSWEDEEEKKDEEKPTKTEAPAKPKPNKALKAKLEQQALLEEEAEAKRLANLSPAEKLAEKLRLQKIQEASDLKHAQEAFGVTSTCGGLDAFNPETKEEFKEFGATLSWKVGQFRESEHFPQFVEDLVRSLCVNLSAADIKKVKMNVEILHSEKLKLEKANAKKPAGKGKGKVTLRTENDDIDGYQKYGNDFTEDYDDFM</sequence>
<organism>
    <name type="scientific">Drosophila melanogaster</name>
    <name type="common">Fruit fly</name>
    <dbReference type="NCBI Taxonomy" id="7227"/>
    <lineage>
        <taxon>Eukaryota</taxon>
        <taxon>Metazoa</taxon>
        <taxon>Ecdysozoa</taxon>
        <taxon>Arthropoda</taxon>
        <taxon>Hexapoda</taxon>
        <taxon>Insecta</taxon>
        <taxon>Pterygota</taxon>
        <taxon>Neoptera</taxon>
        <taxon>Endopterygota</taxon>
        <taxon>Diptera</taxon>
        <taxon>Brachycera</taxon>
        <taxon>Muscomorpha</taxon>
        <taxon>Ephydroidea</taxon>
        <taxon>Drosophilidae</taxon>
        <taxon>Drosophila</taxon>
        <taxon>Sophophora</taxon>
    </lineage>
</organism>
<gene>
    <name evidence="1" type="primary">eIF3j</name>
    <name evidence="1" type="synonym">Adam</name>
    <name evidence="4" type="ORF">CG12131</name>
</gene>
<feature type="chain" id="PRO_0000365135" description="Eukaryotic translation initiation factor 3 subunit J">
    <location>
        <begin position="1"/>
        <end position="236"/>
    </location>
</feature>
<feature type="region of interest" description="Disordered" evidence="2">
    <location>
        <begin position="1"/>
        <end position="65"/>
    </location>
</feature>
<feature type="compositionally biased region" description="Acidic residues" evidence="2">
    <location>
        <begin position="28"/>
        <end position="46"/>
    </location>
</feature>
<feature type="compositionally biased region" description="Basic and acidic residues" evidence="2">
    <location>
        <begin position="47"/>
        <end position="58"/>
    </location>
</feature>
<keyword id="KW-0963">Cytoplasm</keyword>
<keyword id="KW-0396">Initiation factor</keyword>
<keyword id="KW-0648">Protein biosynthesis</keyword>
<keyword id="KW-1185">Reference proteome</keyword>
<accession>Q7K550</accession>
<protein>
    <recommendedName>
        <fullName evidence="1">Eukaryotic translation initiation factor 3 subunit J</fullName>
        <shortName evidence="1">eIF3j</shortName>
    </recommendedName>
</protein>
<name>EIF3J_DROME</name>
<proteinExistence type="evidence at protein level"/>